<comment type="similarity">
    <text evidence="2">Belongs to the D-isomer specific 2-hydroxyacid dehydrogenase family.</text>
</comment>
<dbReference type="EC" id="1.1.1.-"/>
<dbReference type="EMBL" id="AP008934">
    <property type="protein sequence ID" value="BAE17751.1"/>
    <property type="molecule type" value="Genomic_DNA"/>
</dbReference>
<dbReference type="RefSeq" id="WP_002482556.1">
    <property type="nucleotide sequence ID" value="NZ_MTGA01000036.1"/>
</dbReference>
<dbReference type="SMR" id="Q49ZM5"/>
<dbReference type="KEGG" id="ssp:SSP0606"/>
<dbReference type="eggNOG" id="COG1052">
    <property type="taxonomic scope" value="Bacteria"/>
</dbReference>
<dbReference type="HOGENOM" id="CLU_019796_1_2_9"/>
<dbReference type="OrthoDB" id="9805416at2"/>
<dbReference type="Proteomes" id="UP000006371">
    <property type="component" value="Chromosome"/>
</dbReference>
<dbReference type="GO" id="GO:0051287">
    <property type="term" value="F:NAD binding"/>
    <property type="evidence" value="ECO:0007669"/>
    <property type="project" value="InterPro"/>
</dbReference>
<dbReference type="GO" id="GO:0016616">
    <property type="term" value="F:oxidoreductase activity, acting on the CH-OH group of donors, NAD or NADP as acceptor"/>
    <property type="evidence" value="ECO:0007669"/>
    <property type="project" value="InterPro"/>
</dbReference>
<dbReference type="CDD" id="cd12178">
    <property type="entry name" value="2-Hacid_dh_13"/>
    <property type="match status" value="1"/>
</dbReference>
<dbReference type="FunFam" id="3.40.50.720:FF:000203">
    <property type="entry name" value="D-3-phosphoglycerate dehydrogenase (SerA)"/>
    <property type="match status" value="1"/>
</dbReference>
<dbReference type="Gene3D" id="3.40.50.720">
    <property type="entry name" value="NAD(P)-binding Rossmann-like Domain"/>
    <property type="match status" value="2"/>
</dbReference>
<dbReference type="InterPro" id="IPR050857">
    <property type="entry name" value="D-2-hydroxyacid_DH"/>
</dbReference>
<dbReference type="InterPro" id="IPR006139">
    <property type="entry name" value="D-isomer_2_OHA_DH_cat_dom"/>
</dbReference>
<dbReference type="InterPro" id="IPR006140">
    <property type="entry name" value="D-isomer_DH_NAD-bd"/>
</dbReference>
<dbReference type="InterPro" id="IPR036291">
    <property type="entry name" value="NAD(P)-bd_dom_sf"/>
</dbReference>
<dbReference type="PANTHER" id="PTHR42789">
    <property type="entry name" value="D-ISOMER SPECIFIC 2-HYDROXYACID DEHYDROGENASE FAMILY PROTEIN (AFU_ORTHOLOGUE AFUA_6G10090)"/>
    <property type="match status" value="1"/>
</dbReference>
<dbReference type="PANTHER" id="PTHR42789:SF1">
    <property type="entry name" value="D-ISOMER SPECIFIC 2-HYDROXYACID DEHYDROGENASE FAMILY PROTEIN (AFU_ORTHOLOGUE AFUA_6G10090)"/>
    <property type="match status" value="1"/>
</dbReference>
<dbReference type="Pfam" id="PF00389">
    <property type="entry name" value="2-Hacid_dh"/>
    <property type="match status" value="1"/>
</dbReference>
<dbReference type="Pfam" id="PF02826">
    <property type="entry name" value="2-Hacid_dh_C"/>
    <property type="match status" value="1"/>
</dbReference>
<dbReference type="SUPFAM" id="SSF52283">
    <property type="entry name" value="Formate/glycerate dehydrogenase catalytic domain-like"/>
    <property type="match status" value="1"/>
</dbReference>
<dbReference type="SUPFAM" id="SSF51735">
    <property type="entry name" value="NAD(P)-binding Rossmann-fold domains"/>
    <property type="match status" value="1"/>
</dbReference>
<evidence type="ECO:0000250" key="1"/>
<evidence type="ECO:0000305" key="2"/>
<name>Y606_STAS1</name>
<reference key="1">
    <citation type="journal article" date="2005" name="Proc. Natl. Acad. Sci. U.S.A.">
        <title>Whole genome sequence of Staphylococcus saprophyticus reveals the pathogenesis of uncomplicated urinary tract infection.</title>
        <authorList>
            <person name="Kuroda M."/>
            <person name="Yamashita A."/>
            <person name="Hirakawa H."/>
            <person name="Kumano M."/>
            <person name="Morikawa K."/>
            <person name="Higashide M."/>
            <person name="Maruyama A."/>
            <person name="Inose Y."/>
            <person name="Matoba K."/>
            <person name="Toh H."/>
            <person name="Kuhara S."/>
            <person name="Hattori M."/>
            <person name="Ohta T."/>
        </authorList>
    </citation>
    <scope>NUCLEOTIDE SEQUENCE [LARGE SCALE GENOMIC DNA]</scope>
    <source>
        <strain>ATCC 15305 / DSM 20229 / NCIMB 8711 / NCTC 7292 / S-41</strain>
    </source>
</reference>
<accession>Q49ZM5</accession>
<gene>
    <name type="ordered locus">SSP0606</name>
</gene>
<feature type="chain" id="PRO_0000312192" description="Putative 2-hydroxyacid dehydrogenase SSP0606">
    <location>
        <begin position="1"/>
        <end position="318"/>
    </location>
</feature>
<feature type="active site" evidence="1">
    <location>
        <position position="237"/>
    </location>
</feature>
<feature type="active site" evidence="1">
    <location>
        <position position="266"/>
    </location>
</feature>
<feature type="active site" description="Proton donor" evidence="1">
    <location>
        <position position="284"/>
    </location>
</feature>
<feature type="binding site" evidence="1">
    <location>
        <begin position="156"/>
        <end position="157"/>
    </location>
    <ligand>
        <name>NAD(+)</name>
        <dbReference type="ChEBI" id="CHEBI:57540"/>
    </ligand>
</feature>
<feature type="binding site" evidence="1">
    <location>
        <begin position="235"/>
        <end position="237"/>
    </location>
    <ligand>
        <name>NAD(+)</name>
        <dbReference type="ChEBI" id="CHEBI:57540"/>
    </ligand>
</feature>
<feature type="binding site" evidence="1">
    <location>
        <position position="261"/>
    </location>
    <ligand>
        <name>NAD(+)</name>
        <dbReference type="ChEBI" id="CHEBI:57540"/>
    </ligand>
</feature>
<feature type="binding site" evidence="1">
    <location>
        <begin position="284"/>
        <end position="287"/>
    </location>
    <ligand>
        <name>NAD(+)</name>
        <dbReference type="ChEBI" id="CHEBI:57540"/>
    </ligand>
</feature>
<sequence>MVKVYIAGPIPEVGLNLLKDQGFEVDMYEGTGIIDKETLKQGVKDADALISLLSTSVDKEVIDAANNLKIITNYGAGFNNVDIDYARQQNIDVTNTPKASTNSTAELTFALVLAVARRIPEGDKLCRTTGFDGWAPLFFRGREVSGKTIGIIGLGEIGSAVARRAKAFDMNILYTGPHQKVDKEREIGAKYVDLETLLKNADFVTINAAYNPSLHHQIDKAQFEMMKPTSYLINASRGPIVHEKALVQALKDKEIEGAALDVFEFEPEINDELKTLDNVVITPHIGNATFESRDMMSKIVANDTISKLNNDQPKFIVN</sequence>
<organism>
    <name type="scientific">Staphylococcus saprophyticus subsp. saprophyticus (strain ATCC 15305 / DSM 20229 / NCIMB 8711 / NCTC 7292 / S-41)</name>
    <dbReference type="NCBI Taxonomy" id="342451"/>
    <lineage>
        <taxon>Bacteria</taxon>
        <taxon>Bacillati</taxon>
        <taxon>Bacillota</taxon>
        <taxon>Bacilli</taxon>
        <taxon>Bacillales</taxon>
        <taxon>Staphylococcaceae</taxon>
        <taxon>Staphylococcus</taxon>
    </lineage>
</organism>
<protein>
    <recommendedName>
        <fullName>Putative 2-hydroxyacid dehydrogenase SSP0606</fullName>
        <ecNumber>1.1.1.-</ecNumber>
    </recommendedName>
</protein>
<proteinExistence type="inferred from homology"/>
<keyword id="KW-0520">NAD</keyword>
<keyword id="KW-0560">Oxidoreductase</keyword>
<keyword id="KW-1185">Reference proteome</keyword>